<proteinExistence type="predicted"/>
<name>YKT9_CAEEL</name>
<organism>
    <name type="scientific">Caenorhabditis elegans</name>
    <dbReference type="NCBI Taxonomy" id="6239"/>
    <lineage>
        <taxon>Eukaryota</taxon>
        <taxon>Metazoa</taxon>
        <taxon>Ecdysozoa</taxon>
        <taxon>Nematoda</taxon>
        <taxon>Chromadorea</taxon>
        <taxon>Rhabditida</taxon>
        <taxon>Rhabditina</taxon>
        <taxon>Rhabditomorpha</taxon>
        <taxon>Rhabditoidea</taxon>
        <taxon>Rhabditidae</taxon>
        <taxon>Peloderinae</taxon>
        <taxon>Caenorhabditis</taxon>
    </lineage>
</organism>
<dbReference type="EMBL" id="Z29094">
    <property type="protein sequence ID" value="CAA82345.2"/>
    <property type="molecule type" value="Genomic_DNA"/>
</dbReference>
<dbReference type="PIR" id="S40711">
    <property type="entry name" value="S40711"/>
</dbReference>
<dbReference type="RefSeq" id="NP_499137.2">
    <property type="nucleotide sequence ID" value="NM_066736.8"/>
</dbReference>
<dbReference type="FunCoup" id="P34320">
    <property type="interactions" value="1374"/>
</dbReference>
<dbReference type="PaxDb" id="6239-C07A9.9"/>
<dbReference type="EnsemblMetazoa" id="C07A9.9.1">
    <property type="protein sequence ID" value="C07A9.9.1"/>
    <property type="gene ID" value="WBGene00007405"/>
</dbReference>
<dbReference type="GeneID" id="182357"/>
<dbReference type="KEGG" id="cel:CELE_C07A9.9"/>
<dbReference type="UCSC" id="C07A9.9">
    <property type="organism name" value="c. elegans"/>
</dbReference>
<dbReference type="AGR" id="WB:WBGene00007405"/>
<dbReference type="CTD" id="182357"/>
<dbReference type="WormBase" id="C07A9.9">
    <property type="protein sequence ID" value="CE41353"/>
    <property type="gene ID" value="WBGene00007405"/>
</dbReference>
<dbReference type="eggNOG" id="ENOG502TJ1E">
    <property type="taxonomic scope" value="Eukaryota"/>
</dbReference>
<dbReference type="HOGENOM" id="CLU_122535_0_0_1"/>
<dbReference type="InParanoid" id="P34320"/>
<dbReference type="OMA" id="NSERCHF"/>
<dbReference type="OrthoDB" id="10608109at2759"/>
<dbReference type="PRO" id="PR:P34320"/>
<dbReference type="Proteomes" id="UP000001940">
    <property type="component" value="Chromosome III"/>
</dbReference>
<dbReference type="Bgee" id="WBGene00007405">
    <property type="expression patterns" value="Expressed in larva and 3 other cell types or tissues"/>
</dbReference>
<gene>
    <name type="ORF">C07A9.9</name>
</gene>
<accession>P34320</accession>
<sequence length="184" mass="20915">MSSTEQSTSRATTSTNCTKTEETVDVIGTVEVTECNWTMTEESRDAIIRIIKERMSHTEYQYVDDDVPNSERCHFCMKRKGRWMGDDCSDHSSLCKHCCYEMIRDSIKDYKSGPLYARCPQCFRNISSLTRRKRRLTSEGHDENCPAPMVPMVNAEHSISLCDYTTSMMGGGQVNKGFESSSSL</sequence>
<keyword id="KW-1185">Reference proteome</keyword>
<protein>
    <recommendedName>
        <fullName>Uncharacterized protein C07A9.9</fullName>
    </recommendedName>
</protein>
<feature type="chain" id="PRO_0000065164" description="Uncharacterized protein C07A9.9">
    <location>
        <begin position="1"/>
        <end position="184"/>
    </location>
</feature>
<reference key="1">
    <citation type="journal article" date="1994" name="Nature">
        <title>2.2 Mb of contiguous nucleotide sequence from chromosome III of C. elegans.</title>
        <authorList>
            <person name="Wilson R."/>
            <person name="Ainscough R."/>
            <person name="Anderson K."/>
            <person name="Baynes C."/>
            <person name="Berks M."/>
            <person name="Bonfield J."/>
            <person name="Burton J."/>
            <person name="Connell M."/>
            <person name="Copsey T."/>
            <person name="Cooper J."/>
            <person name="Coulson A."/>
            <person name="Craxton M."/>
            <person name="Dear S."/>
            <person name="Du Z."/>
            <person name="Durbin R."/>
            <person name="Favello A."/>
            <person name="Fraser A."/>
            <person name="Fulton L."/>
            <person name="Gardner A."/>
            <person name="Green P."/>
            <person name="Hawkins T."/>
            <person name="Hillier L."/>
            <person name="Jier M."/>
            <person name="Johnston L."/>
            <person name="Jones M."/>
            <person name="Kershaw J."/>
            <person name="Kirsten J."/>
            <person name="Laisster N."/>
            <person name="Latreille P."/>
            <person name="Lightning J."/>
            <person name="Lloyd C."/>
            <person name="Mortimore B."/>
            <person name="O'Callaghan M."/>
            <person name="Parsons J."/>
            <person name="Percy C."/>
            <person name="Rifken L."/>
            <person name="Roopra A."/>
            <person name="Saunders D."/>
            <person name="Shownkeen R."/>
            <person name="Sims M."/>
            <person name="Smaldon N."/>
            <person name="Smith A."/>
            <person name="Smith M."/>
            <person name="Sonnhammer E."/>
            <person name="Staden R."/>
            <person name="Sulston J."/>
            <person name="Thierry-Mieg J."/>
            <person name="Thomas K."/>
            <person name="Vaudin M."/>
            <person name="Vaughan K."/>
            <person name="Waterston R."/>
            <person name="Watson A."/>
            <person name="Weinstock L."/>
            <person name="Wilkinson-Sproat J."/>
            <person name="Wohldman P."/>
        </authorList>
    </citation>
    <scope>NUCLEOTIDE SEQUENCE [LARGE SCALE GENOMIC DNA]</scope>
    <source>
        <strain>Bristol N2</strain>
    </source>
</reference>
<reference key="2">
    <citation type="journal article" date="1998" name="Science">
        <title>Genome sequence of the nematode C. elegans: a platform for investigating biology.</title>
        <authorList>
            <consortium name="The C. elegans sequencing consortium"/>
        </authorList>
    </citation>
    <scope>NUCLEOTIDE SEQUENCE [LARGE SCALE GENOMIC DNA]</scope>
    <source>
        <strain>Bristol N2</strain>
    </source>
</reference>